<feature type="chain" id="PRO_1000139516" description="CTP synthase">
    <location>
        <begin position="1"/>
        <end position="566"/>
    </location>
</feature>
<feature type="domain" description="Glutamine amidotransferase type-1" evidence="1">
    <location>
        <begin position="295"/>
        <end position="547"/>
    </location>
</feature>
<feature type="region of interest" description="Amidoligase domain" evidence="1">
    <location>
        <begin position="1"/>
        <end position="270"/>
    </location>
</feature>
<feature type="active site" description="Nucleophile; for glutamine hydrolysis" evidence="1">
    <location>
        <position position="383"/>
    </location>
</feature>
<feature type="active site" evidence="1">
    <location>
        <position position="520"/>
    </location>
</feature>
<feature type="active site" evidence="1">
    <location>
        <position position="522"/>
    </location>
</feature>
<feature type="binding site" evidence="1">
    <location>
        <position position="13"/>
    </location>
    <ligand>
        <name>CTP</name>
        <dbReference type="ChEBI" id="CHEBI:37563"/>
        <note>allosteric inhibitor</note>
    </ligand>
</feature>
<feature type="binding site" evidence="1">
    <location>
        <position position="13"/>
    </location>
    <ligand>
        <name>UTP</name>
        <dbReference type="ChEBI" id="CHEBI:46398"/>
    </ligand>
</feature>
<feature type="binding site" evidence="1">
    <location>
        <begin position="14"/>
        <end position="19"/>
    </location>
    <ligand>
        <name>ATP</name>
        <dbReference type="ChEBI" id="CHEBI:30616"/>
    </ligand>
</feature>
<feature type="binding site" evidence="1">
    <location>
        <position position="71"/>
    </location>
    <ligand>
        <name>ATP</name>
        <dbReference type="ChEBI" id="CHEBI:30616"/>
    </ligand>
</feature>
<feature type="binding site" evidence="1">
    <location>
        <position position="71"/>
    </location>
    <ligand>
        <name>Mg(2+)</name>
        <dbReference type="ChEBI" id="CHEBI:18420"/>
    </ligand>
</feature>
<feature type="binding site" evidence="1">
    <location>
        <position position="144"/>
    </location>
    <ligand>
        <name>Mg(2+)</name>
        <dbReference type="ChEBI" id="CHEBI:18420"/>
    </ligand>
</feature>
<feature type="binding site" evidence="1">
    <location>
        <begin position="151"/>
        <end position="153"/>
    </location>
    <ligand>
        <name>CTP</name>
        <dbReference type="ChEBI" id="CHEBI:37563"/>
        <note>allosteric inhibitor</note>
    </ligand>
</feature>
<feature type="binding site" evidence="1">
    <location>
        <begin position="191"/>
        <end position="196"/>
    </location>
    <ligand>
        <name>CTP</name>
        <dbReference type="ChEBI" id="CHEBI:37563"/>
        <note>allosteric inhibitor</note>
    </ligand>
</feature>
<feature type="binding site" evidence="1">
    <location>
        <begin position="191"/>
        <end position="196"/>
    </location>
    <ligand>
        <name>UTP</name>
        <dbReference type="ChEBI" id="CHEBI:46398"/>
    </ligand>
</feature>
<feature type="binding site" evidence="1">
    <location>
        <position position="227"/>
    </location>
    <ligand>
        <name>CTP</name>
        <dbReference type="ChEBI" id="CHEBI:37563"/>
        <note>allosteric inhibitor</note>
    </ligand>
</feature>
<feature type="binding site" evidence="1">
    <location>
        <position position="227"/>
    </location>
    <ligand>
        <name>UTP</name>
        <dbReference type="ChEBI" id="CHEBI:46398"/>
    </ligand>
</feature>
<feature type="binding site" evidence="1">
    <location>
        <position position="356"/>
    </location>
    <ligand>
        <name>L-glutamine</name>
        <dbReference type="ChEBI" id="CHEBI:58359"/>
    </ligand>
</feature>
<feature type="binding site" evidence="1">
    <location>
        <begin position="384"/>
        <end position="387"/>
    </location>
    <ligand>
        <name>L-glutamine</name>
        <dbReference type="ChEBI" id="CHEBI:58359"/>
    </ligand>
</feature>
<feature type="binding site" evidence="1">
    <location>
        <position position="407"/>
    </location>
    <ligand>
        <name>L-glutamine</name>
        <dbReference type="ChEBI" id="CHEBI:58359"/>
    </ligand>
</feature>
<feature type="binding site" evidence="1">
    <location>
        <position position="473"/>
    </location>
    <ligand>
        <name>L-glutamine</name>
        <dbReference type="ChEBI" id="CHEBI:58359"/>
    </ligand>
</feature>
<organism>
    <name type="scientific">Polaromonas naphthalenivorans (strain CJ2)</name>
    <dbReference type="NCBI Taxonomy" id="365044"/>
    <lineage>
        <taxon>Bacteria</taxon>
        <taxon>Pseudomonadati</taxon>
        <taxon>Pseudomonadota</taxon>
        <taxon>Betaproteobacteria</taxon>
        <taxon>Burkholderiales</taxon>
        <taxon>Comamonadaceae</taxon>
        <taxon>Polaromonas</taxon>
    </lineage>
</organism>
<reference key="1">
    <citation type="journal article" date="2009" name="Environ. Microbiol.">
        <title>The genome of Polaromonas naphthalenivorans strain CJ2, isolated from coal tar-contaminated sediment, reveals physiological and metabolic versatility and evolution through extensive horizontal gene transfer.</title>
        <authorList>
            <person name="Yagi J.M."/>
            <person name="Sims D."/>
            <person name="Brettin T."/>
            <person name="Bruce D."/>
            <person name="Madsen E.L."/>
        </authorList>
    </citation>
    <scope>NUCLEOTIDE SEQUENCE [LARGE SCALE GENOMIC DNA]</scope>
    <source>
        <strain>CJ2</strain>
    </source>
</reference>
<comment type="function">
    <text evidence="1">Catalyzes the ATP-dependent amination of UTP to CTP with either L-glutamine or ammonia as the source of nitrogen. Regulates intracellular CTP levels through interactions with the four ribonucleotide triphosphates.</text>
</comment>
<comment type="catalytic activity">
    <reaction evidence="1">
        <text>UTP + L-glutamine + ATP + H2O = CTP + L-glutamate + ADP + phosphate + 2 H(+)</text>
        <dbReference type="Rhea" id="RHEA:26426"/>
        <dbReference type="ChEBI" id="CHEBI:15377"/>
        <dbReference type="ChEBI" id="CHEBI:15378"/>
        <dbReference type="ChEBI" id="CHEBI:29985"/>
        <dbReference type="ChEBI" id="CHEBI:30616"/>
        <dbReference type="ChEBI" id="CHEBI:37563"/>
        <dbReference type="ChEBI" id="CHEBI:43474"/>
        <dbReference type="ChEBI" id="CHEBI:46398"/>
        <dbReference type="ChEBI" id="CHEBI:58359"/>
        <dbReference type="ChEBI" id="CHEBI:456216"/>
        <dbReference type="EC" id="6.3.4.2"/>
    </reaction>
</comment>
<comment type="catalytic activity">
    <reaction evidence="1">
        <text>L-glutamine + H2O = L-glutamate + NH4(+)</text>
        <dbReference type="Rhea" id="RHEA:15889"/>
        <dbReference type="ChEBI" id="CHEBI:15377"/>
        <dbReference type="ChEBI" id="CHEBI:28938"/>
        <dbReference type="ChEBI" id="CHEBI:29985"/>
        <dbReference type="ChEBI" id="CHEBI:58359"/>
    </reaction>
</comment>
<comment type="catalytic activity">
    <reaction evidence="1">
        <text>UTP + NH4(+) + ATP = CTP + ADP + phosphate + 2 H(+)</text>
        <dbReference type="Rhea" id="RHEA:16597"/>
        <dbReference type="ChEBI" id="CHEBI:15378"/>
        <dbReference type="ChEBI" id="CHEBI:28938"/>
        <dbReference type="ChEBI" id="CHEBI:30616"/>
        <dbReference type="ChEBI" id="CHEBI:37563"/>
        <dbReference type="ChEBI" id="CHEBI:43474"/>
        <dbReference type="ChEBI" id="CHEBI:46398"/>
        <dbReference type="ChEBI" id="CHEBI:456216"/>
    </reaction>
</comment>
<comment type="activity regulation">
    <text evidence="1">Allosterically activated by GTP, when glutamine is the substrate; GTP has no effect on the reaction when ammonia is the substrate. The allosteric effector GTP functions by stabilizing the protein conformation that binds the tetrahedral intermediate(s) formed during glutamine hydrolysis. Inhibited by the product CTP, via allosteric rather than competitive inhibition.</text>
</comment>
<comment type="pathway">
    <text evidence="1">Pyrimidine metabolism; CTP biosynthesis via de novo pathway; CTP from UDP: step 2/2.</text>
</comment>
<comment type="subunit">
    <text evidence="1">Homotetramer.</text>
</comment>
<comment type="miscellaneous">
    <text evidence="1">CTPSs have evolved a hybrid strategy for distinguishing between UTP and CTP. The overlapping regions of the product feedback inhibitory and substrate sites recognize a common feature in both compounds, the triphosphate moiety. To differentiate isosteric substrate and product pyrimidine rings, an additional pocket far from the expected kinase/ligase catalytic site, specifically recognizes the cytosine and ribose portions of the product inhibitor.</text>
</comment>
<comment type="similarity">
    <text evidence="1">Belongs to the CTP synthase family.</text>
</comment>
<dbReference type="EC" id="6.3.4.2" evidence="1"/>
<dbReference type="EMBL" id="CP000529">
    <property type="protein sequence ID" value="ABM36501.1"/>
    <property type="molecule type" value="Genomic_DNA"/>
</dbReference>
<dbReference type="RefSeq" id="WP_011800594.1">
    <property type="nucleotide sequence ID" value="NC_008781.1"/>
</dbReference>
<dbReference type="SMR" id="A1VLH3"/>
<dbReference type="STRING" id="365044.Pnap_1185"/>
<dbReference type="KEGG" id="pna:Pnap_1185"/>
<dbReference type="eggNOG" id="COG0504">
    <property type="taxonomic scope" value="Bacteria"/>
</dbReference>
<dbReference type="HOGENOM" id="CLU_011675_5_0_4"/>
<dbReference type="OrthoDB" id="9801107at2"/>
<dbReference type="UniPathway" id="UPA00159">
    <property type="reaction ID" value="UER00277"/>
</dbReference>
<dbReference type="Proteomes" id="UP000000644">
    <property type="component" value="Chromosome"/>
</dbReference>
<dbReference type="GO" id="GO:0005829">
    <property type="term" value="C:cytosol"/>
    <property type="evidence" value="ECO:0007669"/>
    <property type="project" value="TreeGrafter"/>
</dbReference>
<dbReference type="GO" id="GO:0005524">
    <property type="term" value="F:ATP binding"/>
    <property type="evidence" value="ECO:0007669"/>
    <property type="project" value="UniProtKB-KW"/>
</dbReference>
<dbReference type="GO" id="GO:0003883">
    <property type="term" value="F:CTP synthase activity"/>
    <property type="evidence" value="ECO:0007669"/>
    <property type="project" value="UniProtKB-UniRule"/>
</dbReference>
<dbReference type="GO" id="GO:0004359">
    <property type="term" value="F:glutaminase activity"/>
    <property type="evidence" value="ECO:0007669"/>
    <property type="project" value="RHEA"/>
</dbReference>
<dbReference type="GO" id="GO:0042802">
    <property type="term" value="F:identical protein binding"/>
    <property type="evidence" value="ECO:0007669"/>
    <property type="project" value="TreeGrafter"/>
</dbReference>
<dbReference type="GO" id="GO:0046872">
    <property type="term" value="F:metal ion binding"/>
    <property type="evidence" value="ECO:0007669"/>
    <property type="project" value="UniProtKB-KW"/>
</dbReference>
<dbReference type="GO" id="GO:0044210">
    <property type="term" value="P:'de novo' CTP biosynthetic process"/>
    <property type="evidence" value="ECO:0007669"/>
    <property type="project" value="UniProtKB-UniRule"/>
</dbReference>
<dbReference type="GO" id="GO:0019856">
    <property type="term" value="P:pyrimidine nucleobase biosynthetic process"/>
    <property type="evidence" value="ECO:0007669"/>
    <property type="project" value="TreeGrafter"/>
</dbReference>
<dbReference type="CDD" id="cd03113">
    <property type="entry name" value="CTPS_N"/>
    <property type="match status" value="1"/>
</dbReference>
<dbReference type="CDD" id="cd01746">
    <property type="entry name" value="GATase1_CTP_Synthase"/>
    <property type="match status" value="1"/>
</dbReference>
<dbReference type="FunFam" id="3.40.50.300:FF:000009">
    <property type="entry name" value="CTP synthase"/>
    <property type="match status" value="1"/>
</dbReference>
<dbReference type="FunFam" id="3.40.50.880:FF:000002">
    <property type="entry name" value="CTP synthase"/>
    <property type="match status" value="1"/>
</dbReference>
<dbReference type="Gene3D" id="3.40.50.880">
    <property type="match status" value="1"/>
</dbReference>
<dbReference type="Gene3D" id="3.40.50.300">
    <property type="entry name" value="P-loop containing nucleotide triphosphate hydrolases"/>
    <property type="match status" value="1"/>
</dbReference>
<dbReference type="HAMAP" id="MF_01227">
    <property type="entry name" value="PyrG"/>
    <property type="match status" value="1"/>
</dbReference>
<dbReference type="InterPro" id="IPR029062">
    <property type="entry name" value="Class_I_gatase-like"/>
</dbReference>
<dbReference type="InterPro" id="IPR004468">
    <property type="entry name" value="CTP_synthase"/>
</dbReference>
<dbReference type="InterPro" id="IPR017456">
    <property type="entry name" value="CTP_synthase_N"/>
</dbReference>
<dbReference type="InterPro" id="IPR017926">
    <property type="entry name" value="GATASE"/>
</dbReference>
<dbReference type="InterPro" id="IPR033828">
    <property type="entry name" value="GATase1_CTP_Synthase"/>
</dbReference>
<dbReference type="InterPro" id="IPR027417">
    <property type="entry name" value="P-loop_NTPase"/>
</dbReference>
<dbReference type="NCBIfam" id="NF003792">
    <property type="entry name" value="PRK05380.1"/>
    <property type="match status" value="1"/>
</dbReference>
<dbReference type="NCBIfam" id="TIGR00337">
    <property type="entry name" value="PyrG"/>
    <property type="match status" value="1"/>
</dbReference>
<dbReference type="PANTHER" id="PTHR11550">
    <property type="entry name" value="CTP SYNTHASE"/>
    <property type="match status" value="1"/>
</dbReference>
<dbReference type="PANTHER" id="PTHR11550:SF0">
    <property type="entry name" value="CTP SYNTHASE-RELATED"/>
    <property type="match status" value="1"/>
</dbReference>
<dbReference type="Pfam" id="PF06418">
    <property type="entry name" value="CTP_synth_N"/>
    <property type="match status" value="1"/>
</dbReference>
<dbReference type="Pfam" id="PF00117">
    <property type="entry name" value="GATase"/>
    <property type="match status" value="1"/>
</dbReference>
<dbReference type="SUPFAM" id="SSF52317">
    <property type="entry name" value="Class I glutamine amidotransferase-like"/>
    <property type="match status" value="1"/>
</dbReference>
<dbReference type="SUPFAM" id="SSF52540">
    <property type="entry name" value="P-loop containing nucleoside triphosphate hydrolases"/>
    <property type="match status" value="1"/>
</dbReference>
<dbReference type="PROSITE" id="PS51273">
    <property type="entry name" value="GATASE_TYPE_1"/>
    <property type="match status" value="1"/>
</dbReference>
<accession>A1VLH3</accession>
<gene>
    <name evidence="1" type="primary">pyrG</name>
    <name type="ordered locus">Pnap_1185</name>
</gene>
<evidence type="ECO:0000255" key="1">
    <source>
        <dbReference type="HAMAP-Rule" id="MF_01227"/>
    </source>
</evidence>
<keyword id="KW-0067">ATP-binding</keyword>
<keyword id="KW-0315">Glutamine amidotransferase</keyword>
<keyword id="KW-0436">Ligase</keyword>
<keyword id="KW-0460">Magnesium</keyword>
<keyword id="KW-0479">Metal-binding</keyword>
<keyword id="KW-0547">Nucleotide-binding</keyword>
<keyword id="KW-0665">Pyrimidine biosynthesis</keyword>
<keyword id="KW-1185">Reference proteome</keyword>
<proteinExistence type="inferred from homology"/>
<protein>
    <recommendedName>
        <fullName evidence="1">CTP synthase</fullName>
        <ecNumber evidence="1">6.3.4.2</ecNumber>
    </recommendedName>
    <alternativeName>
        <fullName evidence="1">Cytidine 5'-triphosphate synthase</fullName>
    </alternativeName>
    <alternativeName>
        <fullName evidence="1">Cytidine triphosphate synthetase</fullName>
        <shortName evidence="1">CTP synthetase</shortName>
        <shortName evidence="1">CTPS</shortName>
    </alternativeName>
    <alternativeName>
        <fullName evidence="1">UTP--ammonia ligase</fullName>
    </alternativeName>
</protein>
<name>PYRG_POLNA</name>
<sequence>MTKFVFVTGGVVSSLGKGIASGALAAILESRGLKVTLIKLDPYINVDPGTMSPLQHGEVFVTDDGAETDLDLGHYERFIETRMRKANNFTTGQIYQSVLDKERRGDYLGKTVQVIPHITNEIQDFIKRGARYDTPDAVDVAIVEIGGTVGDIESLPFLEAVRQMSLRMGPNNSAFVHLSYVPWIAAAGELKTKPTQHTAKQLREIGIQADVLLCRADRPIPTEERDKISLFSNVPAWGVISMWDVDTIYKVPRMLHEQGLDGLICDKLRLHTPPANLKRWDDLVYATEHPQTEVSIAMVGKYVDLSDSYKSLNEALRHAGMKNHAKVVITYVDSETLTPDTVSSLAQFDGILVPGGFGVRGVEGKICAARFARENKIPYLGICLGMQVATIEFARHVAGLKDANSTEFDPLTPHPVIALITEWKDADGTIKTRHAKSDLGGTMRLGAQSSDVSPNSLAHSIYGDVVTERHRHRYEANVNYLDTLRKSGLVISALTQREHLTEIVELPQDVHPWFVGVQFHPEFKSTPWDGHPLFNAYIAATLEQRSALSQAKKAETAKPLKVVAST</sequence>